<proteinExistence type="inferred from homology"/>
<evidence type="ECO:0000255" key="1">
    <source>
        <dbReference type="HAMAP-Rule" id="MF_00226"/>
    </source>
</evidence>
<accession>C3MJ86</accession>
<reference key="1">
    <citation type="journal article" date="2009" name="Proc. Natl. Acad. Sci. U.S.A.">
        <title>Biogeography of the Sulfolobus islandicus pan-genome.</title>
        <authorList>
            <person name="Reno M.L."/>
            <person name="Held N.L."/>
            <person name="Fields C.J."/>
            <person name="Burke P.V."/>
            <person name="Whitaker R.J."/>
        </authorList>
    </citation>
    <scope>NUCLEOTIDE SEQUENCE [LARGE SCALE GENOMIC DNA]</scope>
    <source>
        <strain>L.S.2.15 / Lassen #1</strain>
    </source>
</reference>
<sequence>MDYWFAEIVTIGNEVLSGKTVNTNASHIGRRLTSLGFTVRRITVVMDDIDEIVSAFREAIDRKPKVIVSSGGLGPTWDDKTAEGLAKALGVNLELNKTAFDMILEKYTKRNIPLTEERKKMAYLPYGAMAVENNEGIAPGIYIYHNNIDILATPGVPREMENVLENFINKMLRNKPNLKYLEDFIYVENVMESALAPYVKELVKKYDIYIKTHPKSYELLRPILEIQIAGSGREEEIKVKIEKVKNELLDAIKKLNGIIRNSL</sequence>
<gene>
    <name type="ordered locus">LS215_2186</name>
</gene>
<organism>
    <name type="scientific">Saccharolobus islandicus (strain L.S.2.15 / Lassen #1)</name>
    <name type="common">Sulfolobus islandicus</name>
    <dbReference type="NCBI Taxonomy" id="429572"/>
    <lineage>
        <taxon>Archaea</taxon>
        <taxon>Thermoproteota</taxon>
        <taxon>Thermoprotei</taxon>
        <taxon>Sulfolobales</taxon>
        <taxon>Sulfolobaceae</taxon>
        <taxon>Saccharolobus</taxon>
    </lineage>
</organism>
<protein>
    <recommendedName>
        <fullName evidence="1">Protein LS215_2186</fullName>
    </recommendedName>
</protein>
<comment type="similarity">
    <text evidence="1">Belongs to the CinA family.</text>
</comment>
<name>Y2186_SACI2</name>
<feature type="chain" id="PRO_1000204333" description="Protein LS215_2186">
    <location>
        <begin position="1"/>
        <end position="263"/>
    </location>
</feature>
<dbReference type="EMBL" id="CP001399">
    <property type="protein sequence ID" value="ACP36173.1"/>
    <property type="molecule type" value="Genomic_DNA"/>
</dbReference>
<dbReference type="RefSeq" id="WP_012711988.1">
    <property type="nucleotide sequence ID" value="NC_012589.1"/>
</dbReference>
<dbReference type="SMR" id="C3MJ86"/>
<dbReference type="KEGG" id="sis:LS215_2186"/>
<dbReference type="HOGENOM" id="CLU_030805_0_5_2"/>
<dbReference type="OrthoDB" id="372037at2157"/>
<dbReference type="Proteomes" id="UP000001747">
    <property type="component" value="Chromosome"/>
</dbReference>
<dbReference type="CDD" id="cd00885">
    <property type="entry name" value="cinA"/>
    <property type="match status" value="1"/>
</dbReference>
<dbReference type="Gene3D" id="3.40.980.10">
    <property type="entry name" value="MoaB/Mog-like domain"/>
    <property type="match status" value="1"/>
</dbReference>
<dbReference type="HAMAP" id="MF_00226_A">
    <property type="entry name" value="CinA_A"/>
    <property type="match status" value="1"/>
</dbReference>
<dbReference type="InterPro" id="IPR050101">
    <property type="entry name" value="CinA"/>
</dbReference>
<dbReference type="InterPro" id="IPR023055">
    <property type="entry name" value="CinA_Arc"/>
</dbReference>
<dbReference type="InterPro" id="IPR036425">
    <property type="entry name" value="MoaB/Mog-like_dom_sf"/>
</dbReference>
<dbReference type="InterPro" id="IPR001453">
    <property type="entry name" value="MoaB/Mog_dom"/>
</dbReference>
<dbReference type="NCBIfam" id="NF002291">
    <property type="entry name" value="PRK01215.1"/>
    <property type="match status" value="1"/>
</dbReference>
<dbReference type="PANTHER" id="PTHR13939">
    <property type="entry name" value="NICOTINAMIDE-NUCLEOTIDE AMIDOHYDROLASE PNCC"/>
    <property type="match status" value="1"/>
</dbReference>
<dbReference type="PANTHER" id="PTHR13939:SF0">
    <property type="entry name" value="NMN AMIDOHYDROLASE-LIKE PROTEIN YFAY"/>
    <property type="match status" value="1"/>
</dbReference>
<dbReference type="Pfam" id="PF00994">
    <property type="entry name" value="MoCF_biosynth"/>
    <property type="match status" value="1"/>
</dbReference>
<dbReference type="SMART" id="SM00852">
    <property type="entry name" value="MoCF_biosynth"/>
    <property type="match status" value="1"/>
</dbReference>
<dbReference type="SUPFAM" id="SSF53218">
    <property type="entry name" value="Molybdenum cofactor biosynthesis proteins"/>
    <property type="match status" value="1"/>
</dbReference>